<reference key="1">
    <citation type="journal article" date="2006" name="Proc. Natl. Acad. Sci. U.S.A.">
        <title>Comparative genomics of the lactic acid bacteria.</title>
        <authorList>
            <person name="Makarova K.S."/>
            <person name="Slesarev A."/>
            <person name="Wolf Y.I."/>
            <person name="Sorokin A."/>
            <person name="Mirkin B."/>
            <person name="Koonin E.V."/>
            <person name="Pavlov A."/>
            <person name="Pavlova N."/>
            <person name="Karamychev V."/>
            <person name="Polouchine N."/>
            <person name="Shakhova V."/>
            <person name="Grigoriev I."/>
            <person name="Lou Y."/>
            <person name="Rohksar D."/>
            <person name="Lucas S."/>
            <person name="Huang K."/>
            <person name="Goodstein D.M."/>
            <person name="Hawkins T."/>
            <person name="Plengvidhya V."/>
            <person name="Welker D."/>
            <person name="Hughes J."/>
            <person name="Goh Y."/>
            <person name="Benson A."/>
            <person name="Baldwin K."/>
            <person name="Lee J.-H."/>
            <person name="Diaz-Muniz I."/>
            <person name="Dosti B."/>
            <person name="Smeianov V."/>
            <person name="Wechter W."/>
            <person name="Barabote R."/>
            <person name="Lorca G."/>
            <person name="Altermann E."/>
            <person name="Barrangou R."/>
            <person name="Ganesan B."/>
            <person name="Xie Y."/>
            <person name="Rawsthorne H."/>
            <person name="Tamir D."/>
            <person name="Parker C."/>
            <person name="Breidt F."/>
            <person name="Broadbent J.R."/>
            <person name="Hutkins R."/>
            <person name="O'Sullivan D."/>
            <person name="Steele J."/>
            <person name="Unlu G."/>
            <person name="Saier M.H. Jr."/>
            <person name="Klaenhammer T."/>
            <person name="Richardson P."/>
            <person name="Kozyavkin S."/>
            <person name="Weimer B.C."/>
            <person name="Mills D.A."/>
        </authorList>
    </citation>
    <scope>NUCLEOTIDE SEQUENCE [LARGE SCALE GENOMIC DNA]</scope>
    <source>
        <strain>ATCC 8293 / DSM 20343 / BCRC 11652 / CCM 1803 / JCM 6124 / NCDO 523 / NBRC 100496 / NCIMB 8023 / NCTC 12954 / NRRL B-1118 / 37Y</strain>
    </source>
</reference>
<proteinExistence type="inferred from homology"/>
<sequence length="385" mass="42084">MAKYFTSESVSAGHPDKIADQIADAILDAVLEQDPKARSAVEVTTSTGDVSIFGELSTNAYVNIRKIATDTIREIGYNHAELGFTADSVNVSNKIVEQSGDIAQAVDNAEDDPDQLGAGDQGMVFGYATNETDSYLPLTLALSHRLMRKIRDARENEILPYLRPDAKGEVTVELDDNDKVKRIAAVVLSTQHDDEVTLEQLRADIRKHVIDEVLPQDLVDEDTIYYINPSGRFVLGGPQADSGLTGRKIIVDTYGGAAHHGGGAFSGKDATKVDRSAAYYARYVAKNMVAAGVADKLELQVSYAIGVARPVSLNVDSFGTAKVSEEKINEIITKLFDFRPLAIINNLNLRRPIYKQTAAFGHFGRTDIDLPWESLDKVKEIKNLL</sequence>
<feature type="chain" id="PRO_1000007946" description="S-adenosylmethionine synthase">
    <location>
        <begin position="1"/>
        <end position="385"/>
    </location>
</feature>
<feature type="region of interest" description="Flexible loop" evidence="1">
    <location>
        <begin position="98"/>
        <end position="108"/>
    </location>
</feature>
<feature type="binding site" description="in other chain" evidence="1">
    <location>
        <position position="14"/>
    </location>
    <ligand>
        <name>ATP</name>
        <dbReference type="ChEBI" id="CHEBI:30616"/>
        <note>ligand shared between two neighboring subunits</note>
    </ligand>
</feature>
<feature type="binding site" evidence="1">
    <location>
        <position position="16"/>
    </location>
    <ligand>
        <name>Mg(2+)</name>
        <dbReference type="ChEBI" id="CHEBI:18420"/>
    </ligand>
</feature>
<feature type="binding site" evidence="1">
    <location>
        <position position="42"/>
    </location>
    <ligand>
        <name>K(+)</name>
        <dbReference type="ChEBI" id="CHEBI:29103"/>
    </ligand>
</feature>
<feature type="binding site" description="in other chain" evidence="1">
    <location>
        <position position="55"/>
    </location>
    <ligand>
        <name>L-methionine</name>
        <dbReference type="ChEBI" id="CHEBI:57844"/>
        <note>ligand shared between two neighboring subunits</note>
    </ligand>
</feature>
<feature type="binding site" description="in other chain" evidence="1">
    <location>
        <position position="98"/>
    </location>
    <ligand>
        <name>L-methionine</name>
        <dbReference type="ChEBI" id="CHEBI:57844"/>
        <note>ligand shared between two neighboring subunits</note>
    </ligand>
</feature>
<feature type="binding site" description="in other chain" evidence="1">
    <location>
        <begin position="165"/>
        <end position="167"/>
    </location>
    <ligand>
        <name>ATP</name>
        <dbReference type="ChEBI" id="CHEBI:30616"/>
        <note>ligand shared between two neighboring subunits</note>
    </ligand>
</feature>
<feature type="binding site" description="in other chain" evidence="1">
    <location>
        <begin position="232"/>
        <end position="233"/>
    </location>
    <ligand>
        <name>ATP</name>
        <dbReference type="ChEBI" id="CHEBI:30616"/>
        <note>ligand shared between two neighboring subunits</note>
    </ligand>
</feature>
<feature type="binding site" evidence="1">
    <location>
        <position position="241"/>
    </location>
    <ligand>
        <name>ATP</name>
        <dbReference type="ChEBI" id="CHEBI:30616"/>
        <note>ligand shared between two neighboring subunits</note>
    </ligand>
</feature>
<feature type="binding site" evidence="1">
    <location>
        <position position="241"/>
    </location>
    <ligand>
        <name>L-methionine</name>
        <dbReference type="ChEBI" id="CHEBI:57844"/>
        <note>ligand shared between two neighboring subunits</note>
    </ligand>
</feature>
<feature type="binding site" description="in other chain" evidence="1">
    <location>
        <begin position="247"/>
        <end position="248"/>
    </location>
    <ligand>
        <name>ATP</name>
        <dbReference type="ChEBI" id="CHEBI:30616"/>
        <note>ligand shared between two neighboring subunits</note>
    </ligand>
</feature>
<feature type="binding site" evidence="1">
    <location>
        <position position="264"/>
    </location>
    <ligand>
        <name>ATP</name>
        <dbReference type="ChEBI" id="CHEBI:30616"/>
        <note>ligand shared between two neighboring subunits</note>
    </ligand>
</feature>
<feature type="binding site" evidence="1">
    <location>
        <position position="268"/>
    </location>
    <ligand>
        <name>ATP</name>
        <dbReference type="ChEBI" id="CHEBI:30616"/>
        <note>ligand shared between two neighboring subunits</note>
    </ligand>
</feature>
<feature type="binding site" description="in other chain" evidence="1">
    <location>
        <position position="272"/>
    </location>
    <ligand>
        <name>L-methionine</name>
        <dbReference type="ChEBI" id="CHEBI:57844"/>
        <note>ligand shared between two neighboring subunits</note>
    </ligand>
</feature>
<protein>
    <recommendedName>
        <fullName evidence="1">S-adenosylmethionine synthase</fullName>
        <shortName evidence="1">AdoMet synthase</shortName>
        <ecNumber evidence="1">2.5.1.6</ecNumber>
    </recommendedName>
    <alternativeName>
        <fullName evidence="1">MAT</fullName>
    </alternativeName>
    <alternativeName>
        <fullName evidence="1">Methionine adenosyltransferase</fullName>
    </alternativeName>
</protein>
<dbReference type="EC" id="2.5.1.6" evidence="1"/>
<dbReference type="EMBL" id="CP000414">
    <property type="protein sequence ID" value="ABJ62788.1"/>
    <property type="molecule type" value="Genomic_DNA"/>
</dbReference>
<dbReference type="RefSeq" id="WP_011680314.1">
    <property type="nucleotide sequence ID" value="NC_008531.1"/>
</dbReference>
<dbReference type="SMR" id="Q03VI4"/>
<dbReference type="EnsemblBacteria" id="ABJ62788">
    <property type="protein sequence ID" value="ABJ62788"/>
    <property type="gene ID" value="LEUM_1697"/>
</dbReference>
<dbReference type="GeneID" id="29575766"/>
<dbReference type="KEGG" id="lme:LEUM_1697"/>
<dbReference type="eggNOG" id="COG0192">
    <property type="taxonomic scope" value="Bacteria"/>
</dbReference>
<dbReference type="HOGENOM" id="CLU_041802_1_1_9"/>
<dbReference type="UniPathway" id="UPA00315">
    <property type="reaction ID" value="UER00080"/>
</dbReference>
<dbReference type="Proteomes" id="UP000000362">
    <property type="component" value="Chromosome"/>
</dbReference>
<dbReference type="GO" id="GO:0005737">
    <property type="term" value="C:cytoplasm"/>
    <property type="evidence" value="ECO:0007669"/>
    <property type="project" value="UniProtKB-SubCell"/>
</dbReference>
<dbReference type="GO" id="GO:0005524">
    <property type="term" value="F:ATP binding"/>
    <property type="evidence" value="ECO:0007669"/>
    <property type="project" value="UniProtKB-UniRule"/>
</dbReference>
<dbReference type="GO" id="GO:0000287">
    <property type="term" value="F:magnesium ion binding"/>
    <property type="evidence" value="ECO:0007669"/>
    <property type="project" value="UniProtKB-UniRule"/>
</dbReference>
<dbReference type="GO" id="GO:0004478">
    <property type="term" value="F:methionine adenosyltransferase activity"/>
    <property type="evidence" value="ECO:0007669"/>
    <property type="project" value="UniProtKB-UniRule"/>
</dbReference>
<dbReference type="GO" id="GO:0006730">
    <property type="term" value="P:one-carbon metabolic process"/>
    <property type="evidence" value="ECO:0007669"/>
    <property type="project" value="UniProtKB-KW"/>
</dbReference>
<dbReference type="GO" id="GO:0006556">
    <property type="term" value="P:S-adenosylmethionine biosynthetic process"/>
    <property type="evidence" value="ECO:0007669"/>
    <property type="project" value="UniProtKB-UniRule"/>
</dbReference>
<dbReference type="CDD" id="cd18079">
    <property type="entry name" value="S-AdoMet_synt"/>
    <property type="match status" value="1"/>
</dbReference>
<dbReference type="FunFam" id="3.30.300.10:FF:000003">
    <property type="entry name" value="S-adenosylmethionine synthase"/>
    <property type="match status" value="1"/>
</dbReference>
<dbReference type="Gene3D" id="3.30.300.10">
    <property type="match status" value="3"/>
</dbReference>
<dbReference type="HAMAP" id="MF_00086">
    <property type="entry name" value="S_AdoMet_synth1"/>
    <property type="match status" value="1"/>
</dbReference>
<dbReference type="InterPro" id="IPR022631">
    <property type="entry name" value="ADOMET_SYNTHASE_CS"/>
</dbReference>
<dbReference type="InterPro" id="IPR022630">
    <property type="entry name" value="S-AdoMet_synt_C"/>
</dbReference>
<dbReference type="InterPro" id="IPR022629">
    <property type="entry name" value="S-AdoMet_synt_central"/>
</dbReference>
<dbReference type="InterPro" id="IPR022628">
    <property type="entry name" value="S-AdoMet_synt_N"/>
</dbReference>
<dbReference type="InterPro" id="IPR002133">
    <property type="entry name" value="S-AdoMet_synthetase"/>
</dbReference>
<dbReference type="InterPro" id="IPR022636">
    <property type="entry name" value="S-AdoMet_synthetase_sfam"/>
</dbReference>
<dbReference type="NCBIfam" id="TIGR01034">
    <property type="entry name" value="metK"/>
    <property type="match status" value="1"/>
</dbReference>
<dbReference type="PANTHER" id="PTHR11964">
    <property type="entry name" value="S-ADENOSYLMETHIONINE SYNTHETASE"/>
    <property type="match status" value="1"/>
</dbReference>
<dbReference type="Pfam" id="PF02773">
    <property type="entry name" value="S-AdoMet_synt_C"/>
    <property type="match status" value="1"/>
</dbReference>
<dbReference type="Pfam" id="PF02772">
    <property type="entry name" value="S-AdoMet_synt_M"/>
    <property type="match status" value="1"/>
</dbReference>
<dbReference type="Pfam" id="PF00438">
    <property type="entry name" value="S-AdoMet_synt_N"/>
    <property type="match status" value="1"/>
</dbReference>
<dbReference type="PIRSF" id="PIRSF000497">
    <property type="entry name" value="MAT"/>
    <property type="match status" value="1"/>
</dbReference>
<dbReference type="SUPFAM" id="SSF55973">
    <property type="entry name" value="S-adenosylmethionine synthetase"/>
    <property type="match status" value="3"/>
</dbReference>
<dbReference type="PROSITE" id="PS00376">
    <property type="entry name" value="ADOMET_SYNTHASE_1"/>
    <property type="match status" value="1"/>
</dbReference>
<dbReference type="PROSITE" id="PS00377">
    <property type="entry name" value="ADOMET_SYNTHASE_2"/>
    <property type="match status" value="1"/>
</dbReference>
<name>METK_LEUMM</name>
<gene>
    <name evidence="1" type="primary">metK</name>
    <name type="ordered locus">LEUM_1697</name>
</gene>
<evidence type="ECO:0000255" key="1">
    <source>
        <dbReference type="HAMAP-Rule" id="MF_00086"/>
    </source>
</evidence>
<organism>
    <name type="scientific">Leuconostoc mesenteroides subsp. mesenteroides (strain ATCC 8293 / DSM 20343 / BCRC 11652 / CCM 1803 / JCM 6124 / NCDO 523 / NBRC 100496 / NCIMB 8023 / NCTC 12954 / NRRL B-1118 / 37Y)</name>
    <dbReference type="NCBI Taxonomy" id="203120"/>
    <lineage>
        <taxon>Bacteria</taxon>
        <taxon>Bacillati</taxon>
        <taxon>Bacillota</taxon>
        <taxon>Bacilli</taxon>
        <taxon>Lactobacillales</taxon>
        <taxon>Lactobacillaceae</taxon>
        <taxon>Leuconostoc</taxon>
    </lineage>
</organism>
<comment type="function">
    <text evidence="1">Catalyzes the formation of S-adenosylmethionine (AdoMet) from methionine and ATP. The overall synthetic reaction is composed of two sequential steps, AdoMet formation and the subsequent tripolyphosphate hydrolysis which occurs prior to release of AdoMet from the enzyme.</text>
</comment>
<comment type="catalytic activity">
    <reaction evidence="1">
        <text>L-methionine + ATP + H2O = S-adenosyl-L-methionine + phosphate + diphosphate</text>
        <dbReference type="Rhea" id="RHEA:21080"/>
        <dbReference type="ChEBI" id="CHEBI:15377"/>
        <dbReference type="ChEBI" id="CHEBI:30616"/>
        <dbReference type="ChEBI" id="CHEBI:33019"/>
        <dbReference type="ChEBI" id="CHEBI:43474"/>
        <dbReference type="ChEBI" id="CHEBI:57844"/>
        <dbReference type="ChEBI" id="CHEBI:59789"/>
        <dbReference type="EC" id="2.5.1.6"/>
    </reaction>
</comment>
<comment type="cofactor">
    <cofactor evidence="1">
        <name>Mg(2+)</name>
        <dbReference type="ChEBI" id="CHEBI:18420"/>
    </cofactor>
    <text evidence="1">Binds 2 divalent ions per subunit.</text>
</comment>
<comment type="cofactor">
    <cofactor evidence="1">
        <name>K(+)</name>
        <dbReference type="ChEBI" id="CHEBI:29103"/>
    </cofactor>
    <text evidence="1">Binds 1 potassium ion per subunit.</text>
</comment>
<comment type="pathway">
    <text evidence="1">Amino-acid biosynthesis; S-adenosyl-L-methionine biosynthesis; S-adenosyl-L-methionine from L-methionine: step 1/1.</text>
</comment>
<comment type="subunit">
    <text evidence="1">Homotetramer; dimer of dimers.</text>
</comment>
<comment type="subcellular location">
    <subcellularLocation>
        <location evidence="1">Cytoplasm</location>
    </subcellularLocation>
</comment>
<comment type="similarity">
    <text evidence="1">Belongs to the AdoMet synthase family.</text>
</comment>
<accession>Q03VI4</accession>
<keyword id="KW-0067">ATP-binding</keyword>
<keyword id="KW-0963">Cytoplasm</keyword>
<keyword id="KW-0460">Magnesium</keyword>
<keyword id="KW-0479">Metal-binding</keyword>
<keyword id="KW-0547">Nucleotide-binding</keyword>
<keyword id="KW-0554">One-carbon metabolism</keyword>
<keyword id="KW-0630">Potassium</keyword>
<keyword id="KW-1185">Reference proteome</keyword>
<keyword id="KW-0808">Transferase</keyword>